<sequence>MTDQIRTLQGRVVSDKMDKSITVAIERKVKHPMLGKIIVRTTKLHVHDENNECKTGDLVEIRECRPLSKTKCWTLVSVVEKA</sequence>
<comment type="function">
    <text evidence="1">One of the primary rRNA binding proteins, it binds specifically to the 5'-end of 16S ribosomal RNA.</text>
</comment>
<comment type="subunit">
    <text evidence="1">Part of the 30S ribosomal subunit.</text>
</comment>
<comment type="similarity">
    <text evidence="1">Belongs to the universal ribosomal protein uS17 family.</text>
</comment>
<gene>
    <name evidence="1" type="primary">rpsQ</name>
    <name type="ordered locus">Tola_0108</name>
</gene>
<proteinExistence type="inferred from homology"/>
<accession>C4L7T9</accession>
<name>RS17_TOLAT</name>
<keyword id="KW-1185">Reference proteome</keyword>
<keyword id="KW-0687">Ribonucleoprotein</keyword>
<keyword id="KW-0689">Ribosomal protein</keyword>
<keyword id="KW-0694">RNA-binding</keyword>
<keyword id="KW-0699">rRNA-binding</keyword>
<reference key="1">
    <citation type="submission" date="2009-05" db="EMBL/GenBank/DDBJ databases">
        <title>Complete sequence of Tolumonas auensis DSM 9187.</title>
        <authorList>
            <consortium name="US DOE Joint Genome Institute"/>
            <person name="Lucas S."/>
            <person name="Copeland A."/>
            <person name="Lapidus A."/>
            <person name="Glavina del Rio T."/>
            <person name="Tice H."/>
            <person name="Bruce D."/>
            <person name="Goodwin L."/>
            <person name="Pitluck S."/>
            <person name="Chertkov O."/>
            <person name="Brettin T."/>
            <person name="Detter J.C."/>
            <person name="Han C."/>
            <person name="Larimer F."/>
            <person name="Land M."/>
            <person name="Hauser L."/>
            <person name="Kyrpides N."/>
            <person name="Mikhailova N."/>
            <person name="Spring S."/>
            <person name="Beller H."/>
        </authorList>
    </citation>
    <scope>NUCLEOTIDE SEQUENCE [LARGE SCALE GENOMIC DNA]</scope>
    <source>
        <strain>DSM 9187 / NBRC 110442 / TA 4</strain>
    </source>
</reference>
<evidence type="ECO:0000255" key="1">
    <source>
        <dbReference type="HAMAP-Rule" id="MF_01345"/>
    </source>
</evidence>
<evidence type="ECO:0000305" key="2"/>
<dbReference type="EMBL" id="CP001616">
    <property type="protein sequence ID" value="ACQ91738.1"/>
    <property type="molecule type" value="Genomic_DNA"/>
</dbReference>
<dbReference type="RefSeq" id="WP_012728337.1">
    <property type="nucleotide sequence ID" value="NC_012691.1"/>
</dbReference>
<dbReference type="SMR" id="C4L7T9"/>
<dbReference type="STRING" id="595494.Tola_0108"/>
<dbReference type="KEGG" id="tau:Tola_0108"/>
<dbReference type="eggNOG" id="COG0186">
    <property type="taxonomic scope" value="Bacteria"/>
</dbReference>
<dbReference type="HOGENOM" id="CLU_073626_1_1_6"/>
<dbReference type="OrthoDB" id="9811714at2"/>
<dbReference type="Proteomes" id="UP000009073">
    <property type="component" value="Chromosome"/>
</dbReference>
<dbReference type="GO" id="GO:0022627">
    <property type="term" value="C:cytosolic small ribosomal subunit"/>
    <property type="evidence" value="ECO:0007669"/>
    <property type="project" value="TreeGrafter"/>
</dbReference>
<dbReference type="GO" id="GO:0019843">
    <property type="term" value="F:rRNA binding"/>
    <property type="evidence" value="ECO:0007669"/>
    <property type="project" value="UniProtKB-UniRule"/>
</dbReference>
<dbReference type="GO" id="GO:0003735">
    <property type="term" value="F:structural constituent of ribosome"/>
    <property type="evidence" value="ECO:0007669"/>
    <property type="project" value="InterPro"/>
</dbReference>
<dbReference type="GO" id="GO:0006412">
    <property type="term" value="P:translation"/>
    <property type="evidence" value="ECO:0007669"/>
    <property type="project" value="UniProtKB-UniRule"/>
</dbReference>
<dbReference type="CDD" id="cd00364">
    <property type="entry name" value="Ribosomal_uS17"/>
    <property type="match status" value="1"/>
</dbReference>
<dbReference type="FunFam" id="2.40.50.140:FF:000014">
    <property type="entry name" value="30S ribosomal protein S17"/>
    <property type="match status" value="1"/>
</dbReference>
<dbReference type="Gene3D" id="2.40.50.140">
    <property type="entry name" value="Nucleic acid-binding proteins"/>
    <property type="match status" value="1"/>
</dbReference>
<dbReference type="HAMAP" id="MF_01345_B">
    <property type="entry name" value="Ribosomal_uS17_B"/>
    <property type="match status" value="1"/>
</dbReference>
<dbReference type="InterPro" id="IPR012340">
    <property type="entry name" value="NA-bd_OB-fold"/>
</dbReference>
<dbReference type="InterPro" id="IPR000266">
    <property type="entry name" value="Ribosomal_uS17"/>
</dbReference>
<dbReference type="InterPro" id="IPR019984">
    <property type="entry name" value="Ribosomal_uS17_bact/chlr"/>
</dbReference>
<dbReference type="InterPro" id="IPR019979">
    <property type="entry name" value="Ribosomal_uS17_CS"/>
</dbReference>
<dbReference type="NCBIfam" id="NF004123">
    <property type="entry name" value="PRK05610.1"/>
    <property type="match status" value="1"/>
</dbReference>
<dbReference type="NCBIfam" id="TIGR03635">
    <property type="entry name" value="uS17_bact"/>
    <property type="match status" value="1"/>
</dbReference>
<dbReference type="PANTHER" id="PTHR10744">
    <property type="entry name" value="40S RIBOSOMAL PROTEIN S11 FAMILY MEMBER"/>
    <property type="match status" value="1"/>
</dbReference>
<dbReference type="PANTHER" id="PTHR10744:SF1">
    <property type="entry name" value="SMALL RIBOSOMAL SUBUNIT PROTEIN US17M"/>
    <property type="match status" value="1"/>
</dbReference>
<dbReference type="Pfam" id="PF00366">
    <property type="entry name" value="Ribosomal_S17"/>
    <property type="match status" value="1"/>
</dbReference>
<dbReference type="PRINTS" id="PR00973">
    <property type="entry name" value="RIBOSOMALS17"/>
</dbReference>
<dbReference type="SUPFAM" id="SSF50249">
    <property type="entry name" value="Nucleic acid-binding proteins"/>
    <property type="match status" value="1"/>
</dbReference>
<dbReference type="PROSITE" id="PS00056">
    <property type="entry name" value="RIBOSOMAL_S17"/>
    <property type="match status" value="1"/>
</dbReference>
<organism>
    <name type="scientific">Tolumonas auensis (strain DSM 9187 / NBRC 110442 / TA 4)</name>
    <dbReference type="NCBI Taxonomy" id="595494"/>
    <lineage>
        <taxon>Bacteria</taxon>
        <taxon>Pseudomonadati</taxon>
        <taxon>Pseudomonadota</taxon>
        <taxon>Gammaproteobacteria</taxon>
        <taxon>Aeromonadales</taxon>
        <taxon>Aeromonadaceae</taxon>
        <taxon>Tolumonas</taxon>
    </lineage>
</organism>
<feature type="chain" id="PRO_1000214801" description="Small ribosomal subunit protein uS17">
    <location>
        <begin position="1"/>
        <end position="82"/>
    </location>
</feature>
<protein>
    <recommendedName>
        <fullName evidence="1">Small ribosomal subunit protein uS17</fullName>
    </recommendedName>
    <alternativeName>
        <fullName evidence="2">30S ribosomal protein S17</fullName>
    </alternativeName>
</protein>